<reference key="1">
    <citation type="submission" date="2006-03" db="EMBL/GenBank/DDBJ databases">
        <title>Complete genome sequence of Francisella tularensis LVS (Live Vaccine Strain).</title>
        <authorList>
            <person name="Chain P."/>
            <person name="Larimer F."/>
            <person name="Land M."/>
            <person name="Stilwagen S."/>
            <person name="Larsson P."/>
            <person name="Bearden S."/>
            <person name="Chu M."/>
            <person name="Oyston P."/>
            <person name="Forsman M."/>
            <person name="Andersson S."/>
            <person name="Lindler L."/>
            <person name="Titball R."/>
            <person name="Garcia E."/>
        </authorList>
    </citation>
    <scope>NUCLEOTIDE SEQUENCE [LARGE SCALE GENOMIC DNA]</scope>
    <source>
        <strain>LVS</strain>
    </source>
</reference>
<sequence length="359" mass="40170">MISKLSVNPTFSPSYNIIVDSVLDFSHILEYVTNKQVLVVTNTTVAKLYLTKFLAALVDDLDVRTCILEDGEQYKSQQSLDKILSTLLENHFTRNSTVLVALGGGVIGDITGFAAAIYQRGIDFIQIPTTLLSQVDSSVGGKTAINHQLGKNMIGAFYQPKVVYTSIEFYKTLPQREYIAGMAEVVKYAFISKDFYLWLDSNRDKILAKDSVTLIEMVKRSCQIKAQVVAMDEKELTGARAILNFGHTFGHAIEKCQNYRGLKHGEAVGVGMAQAIDFSHYLGLISQQQAKDFKDFIVSFGISIDFPNDICQKEFLEAMLLDKKNSNKELKFILIENIGSLSLQKQSKNELEQFLDISR</sequence>
<comment type="function">
    <text evidence="1">Catalyzes the conversion of 3-deoxy-D-arabino-heptulosonate 7-phosphate (DAHP) to dehydroquinate (DHQ).</text>
</comment>
<comment type="catalytic activity">
    <reaction evidence="1">
        <text>7-phospho-2-dehydro-3-deoxy-D-arabino-heptonate = 3-dehydroquinate + phosphate</text>
        <dbReference type="Rhea" id="RHEA:21968"/>
        <dbReference type="ChEBI" id="CHEBI:32364"/>
        <dbReference type="ChEBI" id="CHEBI:43474"/>
        <dbReference type="ChEBI" id="CHEBI:58394"/>
        <dbReference type="EC" id="4.2.3.4"/>
    </reaction>
</comment>
<comment type="cofactor">
    <cofactor evidence="1">
        <name>Co(2+)</name>
        <dbReference type="ChEBI" id="CHEBI:48828"/>
    </cofactor>
    <cofactor evidence="1">
        <name>Zn(2+)</name>
        <dbReference type="ChEBI" id="CHEBI:29105"/>
    </cofactor>
    <text evidence="1">Binds 1 divalent metal cation per subunit. Can use either Co(2+) or Zn(2+).</text>
</comment>
<comment type="cofactor">
    <cofactor evidence="1">
        <name>NAD(+)</name>
        <dbReference type="ChEBI" id="CHEBI:57540"/>
    </cofactor>
</comment>
<comment type="pathway">
    <text evidence="1">Metabolic intermediate biosynthesis; chorismate biosynthesis; chorismate from D-erythrose 4-phosphate and phosphoenolpyruvate: step 2/7.</text>
</comment>
<comment type="subcellular location">
    <subcellularLocation>
        <location evidence="1">Cytoplasm</location>
    </subcellularLocation>
</comment>
<comment type="similarity">
    <text evidence="1">Belongs to the sugar phosphate cyclases superfamily. Dehydroquinate synthase family.</text>
</comment>
<gene>
    <name evidence="1" type="primary">aroB</name>
    <name type="ordered locus">FTL_0802</name>
</gene>
<dbReference type="EC" id="4.2.3.4" evidence="1"/>
<dbReference type="EMBL" id="AM233362">
    <property type="protein sequence ID" value="CAJ79241.1"/>
    <property type="molecule type" value="Genomic_DNA"/>
</dbReference>
<dbReference type="RefSeq" id="WP_003015354.1">
    <property type="nucleotide sequence ID" value="NZ_CP009694.1"/>
</dbReference>
<dbReference type="SMR" id="Q2A418"/>
<dbReference type="KEGG" id="ftl:FTL_0802"/>
<dbReference type="UniPathway" id="UPA00053">
    <property type="reaction ID" value="UER00085"/>
</dbReference>
<dbReference type="Proteomes" id="UP000001944">
    <property type="component" value="Chromosome"/>
</dbReference>
<dbReference type="GO" id="GO:0005737">
    <property type="term" value="C:cytoplasm"/>
    <property type="evidence" value="ECO:0007669"/>
    <property type="project" value="UniProtKB-SubCell"/>
</dbReference>
<dbReference type="GO" id="GO:0003856">
    <property type="term" value="F:3-dehydroquinate synthase activity"/>
    <property type="evidence" value="ECO:0007669"/>
    <property type="project" value="UniProtKB-UniRule"/>
</dbReference>
<dbReference type="GO" id="GO:0046872">
    <property type="term" value="F:metal ion binding"/>
    <property type="evidence" value="ECO:0007669"/>
    <property type="project" value="UniProtKB-KW"/>
</dbReference>
<dbReference type="GO" id="GO:0000166">
    <property type="term" value="F:nucleotide binding"/>
    <property type="evidence" value="ECO:0007669"/>
    <property type="project" value="UniProtKB-KW"/>
</dbReference>
<dbReference type="GO" id="GO:0008652">
    <property type="term" value="P:amino acid biosynthetic process"/>
    <property type="evidence" value="ECO:0007669"/>
    <property type="project" value="UniProtKB-KW"/>
</dbReference>
<dbReference type="GO" id="GO:0009073">
    <property type="term" value="P:aromatic amino acid family biosynthetic process"/>
    <property type="evidence" value="ECO:0007669"/>
    <property type="project" value="UniProtKB-KW"/>
</dbReference>
<dbReference type="GO" id="GO:0009423">
    <property type="term" value="P:chorismate biosynthetic process"/>
    <property type="evidence" value="ECO:0007669"/>
    <property type="project" value="UniProtKB-UniRule"/>
</dbReference>
<dbReference type="CDD" id="cd08195">
    <property type="entry name" value="DHQS"/>
    <property type="match status" value="1"/>
</dbReference>
<dbReference type="FunFam" id="3.40.50.1970:FF:000001">
    <property type="entry name" value="3-dehydroquinate synthase"/>
    <property type="match status" value="1"/>
</dbReference>
<dbReference type="Gene3D" id="3.40.50.1970">
    <property type="match status" value="1"/>
</dbReference>
<dbReference type="Gene3D" id="1.20.1090.10">
    <property type="entry name" value="Dehydroquinate synthase-like - alpha domain"/>
    <property type="match status" value="1"/>
</dbReference>
<dbReference type="HAMAP" id="MF_00110">
    <property type="entry name" value="DHQ_synthase"/>
    <property type="match status" value="1"/>
</dbReference>
<dbReference type="InterPro" id="IPR050071">
    <property type="entry name" value="Dehydroquinate_synthase"/>
</dbReference>
<dbReference type="InterPro" id="IPR016037">
    <property type="entry name" value="DHQ_synth_AroB"/>
</dbReference>
<dbReference type="InterPro" id="IPR030963">
    <property type="entry name" value="DHQ_synth_fam"/>
</dbReference>
<dbReference type="InterPro" id="IPR030960">
    <property type="entry name" value="DHQS/DOIS_N"/>
</dbReference>
<dbReference type="InterPro" id="IPR056179">
    <property type="entry name" value="DHQS_C"/>
</dbReference>
<dbReference type="NCBIfam" id="TIGR01357">
    <property type="entry name" value="aroB"/>
    <property type="match status" value="1"/>
</dbReference>
<dbReference type="PANTHER" id="PTHR43622">
    <property type="entry name" value="3-DEHYDROQUINATE SYNTHASE"/>
    <property type="match status" value="1"/>
</dbReference>
<dbReference type="PANTHER" id="PTHR43622:SF7">
    <property type="entry name" value="3-DEHYDROQUINATE SYNTHASE, CHLOROPLASTIC"/>
    <property type="match status" value="1"/>
</dbReference>
<dbReference type="Pfam" id="PF01761">
    <property type="entry name" value="DHQ_synthase"/>
    <property type="match status" value="1"/>
</dbReference>
<dbReference type="Pfam" id="PF24621">
    <property type="entry name" value="DHQS_C"/>
    <property type="match status" value="1"/>
</dbReference>
<dbReference type="PIRSF" id="PIRSF001455">
    <property type="entry name" value="DHQ_synth"/>
    <property type="match status" value="1"/>
</dbReference>
<dbReference type="SUPFAM" id="SSF56796">
    <property type="entry name" value="Dehydroquinate synthase-like"/>
    <property type="match status" value="1"/>
</dbReference>
<name>AROB_FRATH</name>
<feature type="chain" id="PRO_1000094519" description="3-dehydroquinate synthase">
    <location>
        <begin position="1"/>
        <end position="359"/>
    </location>
</feature>
<feature type="binding site" evidence="1">
    <location>
        <begin position="70"/>
        <end position="75"/>
    </location>
    <ligand>
        <name>NAD(+)</name>
        <dbReference type="ChEBI" id="CHEBI:57540"/>
    </ligand>
</feature>
<feature type="binding site" evidence="1">
    <location>
        <begin position="105"/>
        <end position="109"/>
    </location>
    <ligand>
        <name>NAD(+)</name>
        <dbReference type="ChEBI" id="CHEBI:57540"/>
    </ligand>
</feature>
<feature type="binding site" evidence="1">
    <location>
        <begin position="129"/>
        <end position="130"/>
    </location>
    <ligand>
        <name>NAD(+)</name>
        <dbReference type="ChEBI" id="CHEBI:57540"/>
    </ligand>
</feature>
<feature type="binding site" evidence="1">
    <location>
        <position position="142"/>
    </location>
    <ligand>
        <name>NAD(+)</name>
        <dbReference type="ChEBI" id="CHEBI:57540"/>
    </ligand>
</feature>
<feature type="binding site" evidence="1">
    <location>
        <position position="151"/>
    </location>
    <ligand>
        <name>NAD(+)</name>
        <dbReference type="ChEBI" id="CHEBI:57540"/>
    </ligand>
</feature>
<feature type="binding site" evidence="1">
    <location>
        <begin position="169"/>
        <end position="172"/>
    </location>
    <ligand>
        <name>NAD(+)</name>
        <dbReference type="ChEBI" id="CHEBI:57540"/>
    </ligand>
</feature>
<feature type="binding site" evidence="1">
    <location>
        <position position="184"/>
    </location>
    <ligand>
        <name>Zn(2+)</name>
        <dbReference type="ChEBI" id="CHEBI:29105"/>
    </ligand>
</feature>
<feature type="binding site" evidence="1">
    <location>
        <position position="247"/>
    </location>
    <ligand>
        <name>Zn(2+)</name>
        <dbReference type="ChEBI" id="CHEBI:29105"/>
    </ligand>
</feature>
<feature type="binding site" evidence="1">
    <location>
        <position position="264"/>
    </location>
    <ligand>
        <name>Zn(2+)</name>
        <dbReference type="ChEBI" id="CHEBI:29105"/>
    </ligand>
</feature>
<keyword id="KW-0028">Amino-acid biosynthesis</keyword>
<keyword id="KW-0057">Aromatic amino acid biosynthesis</keyword>
<keyword id="KW-0170">Cobalt</keyword>
<keyword id="KW-0963">Cytoplasm</keyword>
<keyword id="KW-0456">Lyase</keyword>
<keyword id="KW-0479">Metal-binding</keyword>
<keyword id="KW-0520">NAD</keyword>
<keyword id="KW-0547">Nucleotide-binding</keyword>
<keyword id="KW-1185">Reference proteome</keyword>
<keyword id="KW-0862">Zinc</keyword>
<protein>
    <recommendedName>
        <fullName evidence="1">3-dehydroquinate synthase</fullName>
        <shortName evidence="1">DHQS</shortName>
        <ecNumber evidence="1">4.2.3.4</ecNumber>
    </recommendedName>
</protein>
<evidence type="ECO:0000255" key="1">
    <source>
        <dbReference type="HAMAP-Rule" id="MF_00110"/>
    </source>
</evidence>
<accession>Q2A418</accession>
<organism>
    <name type="scientific">Francisella tularensis subsp. holarctica (strain LVS)</name>
    <dbReference type="NCBI Taxonomy" id="376619"/>
    <lineage>
        <taxon>Bacteria</taxon>
        <taxon>Pseudomonadati</taxon>
        <taxon>Pseudomonadota</taxon>
        <taxon>Gammaproteobacteria</taxon>
        <taxon>Thiotrichales</taxon>
        <taxon>Francisellaceae</taxon>
        <taxon>Francisella</taxon>
    </lineage>
</organism>
<proteinExistence type="inferred from homology"/>